<keyword id="KW-0997">Cell inner membrane</keyword>
<keyword id="KW-1003">Cell membrane</keyword>
<keyword id="KW-0472">Membrane</keyword>
<keyword id="KW-0812">Transmembrane</keyword>
<keyword id="KW-1133">Transmembrane helix</keyword>
<keyword id="KW-0813">Transport</keyword>
<protein>
    <recommendedName>
        <fullName evidence="1">Putative multidrug resistance protein MdtD</fullName>
    </recommendedName>
</protein>
<comment type="subcellular location">
    <subcellularLocation>
        <location evidence="1">Cell inner membrane</location>
        <topology evidence="1">Multi-pass membrane protein</topology>
    </subcellularLocation>
</comment>
<comment type="similarity">
    <text evidence="1">Belongs to the major facilitator superfamily. TCR/Tet family.</text>
</comment>
<sequence>MTELPDNTRWQLWIVAFGFFMQSLDTTIVNTALPSMAKSLGESPLHMHMVVVSYVLTVAVMLPASGWLADKIGVRNIFFAAIVLFTLGSLFCALSGTLNQLVLARVLQGVGGAMMVPVGRLTVMKIVPRAQYMAAMTFVTLPGQIGPLLGPALGGVLVEYASWHWIFLINIPVGIVGAMATFMLMPNYTIETRRFDLPGFLLLAIGMAVLTLALDGSKSMGISPWTLAGLAAGGAAAILLYLFHAKKNSGALFSLRLFRTPTFSLGLLGSFAGRIGSGMLPFMTPVFLQIGLGFSPFHAGLMMIPMVLGSMGMKRIVVQIVNRFGYRRVLVATTLGLALVSLLFMSVALLGWYYLLPLVLLLQGMVNSARFSSMNTLTLKDLPDTLASSGNSLLSMIMQLSMSIGVTIAGMLLGMFGQQHIGIDSSATHHVFMYTWLCMAVIIALPAIIFARVPNDTQQNMVISRRKRSL</sequence>
<accession>B5EXV9</accession>
<organism>
    <name type="scientific">Salmonella agona (strain SL483)</name>
    <dbReference type="NCBI Taxonomy" id="454166"/>
    <lineage>
        <taxon>Bacteria</taxon>
        <taxon>Pseudomonadati</taxon>
        <taxon>Pseudomonadota</taxon>
        <taxon>Gammaproteobacteria</taxon>
        <taxon>Enterobacterales</taxon>
        <taxon>Enterobacteriaceae</taxon>
        <taxon>Salmonella</taxon>
    </lineage>
</organism>
<dbReference type="EMBL" id="CP001138">
    <property type="protein sequence ID" value="ACH49887.1"/>
    <property type="molecule type" value="Genomic_DNA"/>
</dbReference>
<dbReference type="RefSeq" id="WP_000137818.1">
    <property type="nucleotide sequence ID" value="NC_011149.1"/>
</dbReference>
<dbReference type="SMR" id="B5EXV9"/>
<dbReference type="KEGG" id="sea:SeAg_B2259"/>
<dbReference type="HOGENOM" id="CLU_000960_28_0_6"/>
<dbReference type="Proteomes" id="UP000008819">
    <property type="component" value="Chromosome"/>
</dbReference>
<dbReference type="GO" id="GO:0005886">
    <property type="term" value="C:plasma membrane"/>
    <property type="evidence" value="ECO:0007669"/>
    <property type="project" value="UniProtKB-SubCell"/>
</dbReference>
<dbReference type="GO" id="GO:0022857">
    <property type="term" value="F:transmembrane transporter activity"/>
    <property type="evidence" value="ECO:0007669"/>
    <property type="project" value="UniProtKB-UniRule"/>
</dbReference>
<dbReference type="CDD" id="cd17503">
    <property type="entry name" value="MFS_LmrB_MDR_like"/>
    <property type="match status" value="1"/>
</dbReference>
<dbReference type="FunFam" id="1.20.1250.20:FF:000021">
    <property type="entry name" value="Putative multidrug resistance protein MdtD"/>
    <property type="match status" value="1"/>
</dbReference>
<dbReference type="FunFam" id="1.20.1720.10:FF:000001">
    <property type="entry name" value="Putative multidrug resistance protein MdtD"/>
    <property type="match status" value="1"/>
</dbReference>
<dbReference type="Gene3D" id="1.20.1250.20">
    <property type="entry name" value="MFS general substrate transporter like domains"/>
    <property type="match status" value="1"/>
</dbReference>
<dbReference type="Gene3D" id="1.20.1720.10">
    <property type="entry name" value="Multidrug resistance protein D"/>
    <property type="match status" value="1"/>
</dbReference>
<dbReference type="HAMAP" id="MF_01577">
    <property type="entry name" value="MFS_MdtD"/>
    <property type="match status" value="1"/>
</dbReference>
<dbReference type="InterPro" id="IPR011701">
    <property type="entry name" value="MFS"/>
</dbReference>
<dbReference type="InterPro" id="IPR020846">
    <property type="entry name" value="MFS_dom"/>
</dbReference>
<dbReference type="InterPro" id="IPR036259">
    <property type="entry name" value="MFS_trans_sf"/>
</dbReference>
<dbReference type="InterPro" id="IPR023721">
    <property type="entry name" value="Multi-R_MdtD"/>
</dbReference>
<dbReference type="NCBIfam" id="NF007799">
    <property type="entry name" value="PRK10504.1"/>
    <property type="match status" value="1"/>
</dbReference>
<dbReference type="PANTHER" id="PTHR42718:SF46">
    <property type="entry name" value="BLR6921 PROTEIN"/>
    <property type="match status" value="1"/>
</dbReference>
<dbReference type="PANTHER" id="PTHR42718">
    <property type="entry name" value="MAJOR FACILITATOR SUPERFAMILY MULTIDRUG TRANSPORTER MFSC"/>
    <property type="match status" value="1"/>
</dbReference>
<dbReference type="Pfam" id="PF07690">
    <property type="entry name" value="MFS_1"/>
    <property type="match status" value="1"/>
</dbReference>
<dbReference type="PRINTS" id="PR01036">
    <property type="entry name" value="TCRTETB"/>
</dbReference>
<dbReference type="SUPFAM" id="SSF103473">
    <property type="entry name" value="MFS general substrate transporter"/>
    <property type="match status" value="1"/>
</dbReference>
<dbReference type="PROSITE" id="PS50850">
    <property type="entry name" value="MFS"/>
    <property type="match status" value="1"/>
</dbReference>
<evidence type="ECO:0000255" key="1">
    <source>
        <dbReference type="HAMAP-Rule" id="MF_01577"/>
    </source>
</evidence>
<proteinExistence type="inferred from homology"/>
<reference key="1">
    <citation type="journal article" date="2011" name="J. Bacteriol.">
        <title>Comparative genomics of 28 Salmonella enterica isolates: evidence for CRISPR-mediated adaptive sublineage evolution.</title>
        <authorList>
            <person name="Fricke W.F."/>
            <person name="Mammel M.K."/>
            <person name="McDermott P.F."/>
            <person name="Tartera C."/>
            <person name="White D.G."/>
            <person name="Leclerc J.E."/>
            <person name="Ravel J."/>
            <person name="Cebula T.A."/>
        </authorList>
    </citation>
    <scope>NUCLEOTIDE SEQUENCE [LARGE SCALE GENOMIC DNA]</scope>
    <source>
        <strain>SL483</strain>
    </source>
</reference>
<gene>
    <name evidence="1" type="primary">mdtD</name>
    <name type="ordered locus">SeAg_B2259</name>
</gene>
<name>MDTD_SALA4</name>
<feature type="chain" id="PRO_0000365283" description="Putative multidrug resistance protein MdtD">
    <location>
        <begin position="1"/>
        <end position="470"/>
    </location>
</feature>
<feature type="topological domain" description="Periplasmic" evidence="1">
    <location>
        <begin position="1"/>
        <end position="11"/>
    </location>
</feature>
<feature type="transmembrane region" description="Helical" evidence="1">
    <location>
        <begin position="12"/>
        <end position="32"/>
    </location>
</feature>
<feature type="topological domain" description="Cytoplasmic" evidence="1">
    <location>
        <begin position="33"/>
        <end position="48"/>
    </location>
</feature>
<feature type="transmembrane region" description="Helical" evidence="1">
    <location>
        <begin position="49"/>
        <end position="69"/>
    </location>
</feature>
<feature type="topological domain" description="Periplasmic" evidence="1">
    <location>
        <begin position="70"/>
        <end position="76"/>
    </location>
</feature>
<feature type="transmembrane region" description="Helical" evidence="1">
    <location>
        <begin position="77"/>
        <end position="97"/>
    </location>
</feature>
<feature type="topological domain" description="Cytoplasmic" evidence="1">
    <location>
        <begin position="98"/>
        <end position="101"/>
    </location>
</feature>
<feature type="transmembrane region" description="Helical" evidence="1">
    <location>
        <begin position="102"/>
        <end position="124"/>
    </location>
</feature>
<feature type="topological domain" description="Periplasmic" evidence="1">
    <location>
        <begin position="125"/>
        <end position="137"/>
    </location>
</feature>
<feature type="transmembrane region" description="Helical" evidence="1">
    <location>
        <begin position="138"/>
        <end position="158"/>
    </location>
</feature>
<feature type="topological domain" description="Cytoplasmic" evidence="1">
    <location>
        <begin position="159"/>
        <end position="164"/>
    </location>
</feature>
<feature type="transmembrane region" description="Helical" evidence="1">
    <location>
        <begin position="165"/>
        <end position="185"/>
    </location>
</feature>
<feature type="topological domain" description="Periplasmic" evidence="1">
    <location>
        <begin position="186"/>
        <end position="196"/>
    </location>
</feature>
<feature type="transmembrane region" description="Helical" evidence="1">
    <location>
        <begin position="197"/>
        <end position="217"/>
    </location>
</feature>
<feature type="topological domain" description="Cytoplasmic" evidence="1">
    <location>
        <begin position="218"/>
        <end position="224"/>
    </location>
</feature>
<feature type="transmembrane region" description="Helical" evidence="1">
    <location>
        <begin position="225"/>
        <end position="245"/>
    </location>
</feature>
<feature type="topological domain" description="Periplasmic" evidence="1">
    <location>
        <begin position="246"/>
        <end position="262"/>
    </location>
</feature>
<feature type="transmembrane region" description="Helical" evidence="1">
    <location>
        <begin position="263"/>
        <end position="283"/>
    </location>
</feature>
<feature type="topological domain" description="Cytoplasmic" evidence="1">
    <location>
        <begin position="284"/>
        <end position="285"/>
    </location>
</feature>
<feature type="transmembrane region" description="Helical" evidence="1">
    <location>
        <begin position="286"/>
        <end position="306"/>
    </location>
</feature>
<feature type="topological domain" description="Periplasmic" evidence="1">
    <location>
        <begin position="307"/>
        <end position="341"/>
    </location>
</feature>
<feature type="transmembrane region" description="Helical" evidence="1">
    <location>
        <begin position="342"/>
        <end position="362"/>
    </location>
</feature>
<feature type="topological domain" description="Cytoplasmic" evidence="1">
    <location>
        <begin position="363"/>
        <end position="395"/>
    </location>
</feature>
<feature type="transmembrane region" description="Helical" evidence="1">
    <location>
        <begin position="396"/>
        <end position="416"/>
    </location>
</feature>
<feature type="topological domain" description="Periplasmic" evidence="1">
    <location>
        <begin position="417"/>
        <end position="430"/>
    </location>
</feature>
<feature type="transmembrane region" description="Helical" evidence="1">
    <location>
        <begin position="431"/>
        <end position="451"/>
    </location>
</feature>
<feature type="topological domain" description="Cytoplasmic" evidence="1">
    <location>
        <begin position="452"/>
        <end position="470"/>
    </location>
</feature>